<feature type="chain" id="PRO_1000134471" description="Acetyl-coenzyme A carboxylase carboxyl transferase subunit alpha">
    <location>
        <begin position="1"/>
        <end position="335"/>
    </location>
</feature>
<feature type="domain" description="CoA carboxyltransferase C-terminal" evidence="2">
    <location>
        <begin position="48"/>
        <end position="308"/>
    </location>
</feature>
<reference key="1">
    <citation type="submission" date="2008-06" db="EMBL/GenBank/DDBJ databases">
        <title>Complete sequence of Chlorobium phaeobacteroides BS1.</title>
        <authorList>
            <consortium name="US DOE Joint Genome Institute"/>
            <person name="Lucas S."/>
            <person name="Copeland A."/>
            <person name="Lapidus A."/>
            <person name="Glavina del Rio T."/>
            <person name="Dalin E."/>
            <person name="Tice H."/>
            <person name="Bruce D."/>
            <person name="Goodwin L."/>
            <person name="Pitluck S."/>
            <person name="Schmutz J."/>
            <person name="Larimer F."/>
            <person name="Land M."/>
            <person name="Hauser L."/>
            <person name="Kyrpides N."/>
            <person name="Ovchinnikova G."/>
            <person name="Li T."/>
            <person name="Liu Z."/>
            <person name="Zhao F."/>
            <person name="Overmann J."/>
            <person name="Bryant D.A."/>
            <person name="Richardson P."/>
        </authorList>
    </citation>
    <scope>NUCLEOTIDE SEQUENCE [LARGE SCALE GENOMIC DNA]</scope>
    <source>
        <strain>BS1</strain>
    </source>
</reference>
<sequence length="335" mass="37983">MATKVVLDFEKPLFELEEKLNEMRVCLKQSSGEHNLSETESLSREIEVLESKVDALRHAIYKNLTRWQKVQLARHPERPFTLDYIYMMMQDFVELSGDRHYGDDKALIGGFARIEDEERDFSQTVMVIGHQKGRDTKSNLYRNFGMSQPEGYRKALRLMKLAEKFNKPVVTLIDTPGAYPGIKAEELGQAEAIARNLFEMAGLRVPVICVIIGEGASGGAIGIGVGNRILMAENAWYSVISPESCSSILWRSWKFKEQAAEALKLTAEDLLEQKIVDRIIPEPLGGAHHDPEKMADTVKSLLVEELRMLLEKNPDDLVNERIEKFAAMGVWNEEE</sequence>
<protein>
    <recommendedName>
        <fullName evidence="1">Acetyl-coenzyme A carboxylase carboxyl transferase subunit alpha</fullName>
        <shortName evidence="1">ACCase subunit alpha</shortName>
        <shortName evidence="1">Acetyl-CoA carboxylase carboxyltransferase subunit alpha</shortName>
        <ecNumber evidence="1">2.1.3.15</ecNumber>
    </recommendedName>
</protein>
<proteinExistence type="inferred from homology"/>
<comment type="function">
    <text evidence="1">Component of the acetyl coenzyme A carboxylase (ACC) complex. First, biotin carboxylase catalyzes the carboxylation of biotin on its carrier protein (BCCP) and then the CO(2) group is transferred by the carboxyltransferase to acetyl-CoA to form malonyl-CoA.</text>
</comment>
<comment type="catalytic activity">
    <reaction evidence="1">
        <text>N(6)-carboxybiotinyl-L-lysyl-[protein] + acetyl-CoA = N(6)-biotinyl-L-lysyl-[protein] + malonyl-CoA</text>
        <dbReference type="Rhea" id="RHEA:54728"/>
        <dbReference type="Rhea" id="RHEA-COMP:10505"/>
        <dbReference type="Rhea" id="RHEA-COMP:10506"/>
        <dbReference type="ChEBI" id="CHEBI:57288"/>
        <dbReference type="ChEBI" id="CHEBI:57384"/>
        <dbReference type="ChEBI" id="CHEBI:83144"/>
        <dbReference type="ChEBI" id="CHEBI:83145"/>
        <dbReference type="EC" id="2.1.3.15"/>
    </reaction>
</comment>
<comment type="pathway">
    <text evidence="1">Lipid metabolism; malonyl-CoA biosynthesis; malonyl-CoA from acetyl-CoA: step 1/1.</text>
</comment>
<comment type="subunit">
    <text evidence="1">Acetyl-CoA carboxylase is a heterohexamer composed of biotin carboxyl carrier protein (AccB), biotin carboxylase (AccC) and two subunits each of ACCase subunit alpha (AccA) and ACCase subunit beta (AccD).</text>
</comment>
<comment type="subcellular location">
    <subcellularLocation>
        <location evidence="1">Cytoplasm</location>
    </subcellularLocation>
</comment>
<comment type="similarity">
    <text evidence="1">Belongs to the AccA family.</text>
</comment>
<name>ACCA_CHLPB</name>
<keyword id="KW-0067">ATP-binding</keyword>
<keyword id="KW-0963">Cytoplasm</keyword>
<keyword id="KW-0275">Fatty acid biosynthesis</keyword>
<keyword id="KW-0276">Fatty acid metabolism</keyword>
<keyword id="KW-0444">Lipid biosynthesis</keyword>
<keyword id="KW-0443">Lipid metabolism</keyword>
<keyword id="KW-0547">Nucleotide-binding</keyword>
<keyword id="KW-0808">Transferase</keyword>
<organism>
    <name type="scientific">Chlorobium phaeobacteroides (strain BS1)</name>
    <dbReference type="NCBI Taxonomy" id="331678"/>
    <lineage>
        <taxon>Bacteria</taxon>
        <taxon>Pseudomonadati</taxon>
        <taxon>Chlorobiota</taxon>
        <taxon>Chlorobiia</taxon>
        <taxon>Chlorobiales</taxon>
        <taxon>Chlorobiaceae</taxon>
        <taxon>Chlorobium/Pelodictyon group</taxon>
        <taxon>Chlorobium</taxon>
    </lineage>
</organism>
<accession>B3EL67</accession>
<dbReference type="EC" id="2.1.3.15" evidence="1"/>
<dbReference type="EMBL" id="CP001101">
    <property type="protein sequence ID" value="ACE03294.1"/>
    <property type="molecule type" value="Genomic_DNA"/>
</dbReference>
<dbReference type="SMR" id="B3EL67"/>
<dbReference type="STRING" id="331678.Cphamn1_0325"/>
<dbReference type="KEGG" id="cpb:Cphamn1_0325"/>
<dbReference type="eggNOG" id="COG0825">
    <property type="taxonomic scope" value="Bacteria"/>
</dbReference>
<dbReference type="HOGENOM" id="CLU_015486_0_2_10"/>
<dbReference type="OrthoDB" id="9808023at2"/>
<dbReference type="UniPathway" id="UPA00655">
    <property type="reaction ID" value="UER00711"/>
</dbReference>
<dbReference type="GO" id="GO:0009317">
    <property type="term" value="C:acetyl-CoA carboxylase complex"/>
    <property type="evidence" value="ECO:0007669"/>
    <property type="project" value="InterPro"/>
</dbReference>
<dbReference type="GO" id="GO:0003989">
    <property type="term" value="F:acetyl-CoA carboxylase activity"/>
    <property type="evidence" value="ECO:0007669"/>
    <property type="project" value="InterPro"/>
</dbReference>
<dbReference type="GO" id="GO:0005524">
    <property type="term" value="F:ATP binding"/>
    <property type="evidence" value="ECO:0007669"/>
    <property type="project" value="UniProtKB-KW"/>
</dbReference>
<dbReference type="GO" id="GO:0016743">
    <property type="term" value="F:carboxyl- or carbamoyltransferase activity"/>
    <property type="evidence" value="ECO:0007669"/>
    <property type="project" value="UniProtKB-UniRule"/>
</dbReference>
<dbReference type="GO" id="GO:0006633">
    <property type="term" value="P:fatty acid biosynthetic process"/>
    <property type="evidence" value="ECO:0007669"/>
    <property type="project" value="UniProtKB-KW"/>
</dbReference>
<dbReference type="GO" id="GO:2001295">
    <property type="term" value="P:malonyl-CoA biosynthetic process"/>
    <property type="evidence" value="ECO:0007669"/>
    <property type="project" value="UniProtKB-UniRule"/>
</dbReference>
<dbReference type="Gene3D" id="3.90.226.10">
    <property type="entry name" value="2-enoyl-CoA Hydratase, Chain A, domain 1"/>
    <property type="match status" value="1"/>
</dbReference>
<dbReference type="HAMAP" id="MF_00823">
    <property type="entry name" value="AcetylCoA_CT_alpha"/>
    <property type="match status" value="1"/>
</dbReference>
<dbReference type="InterPro" id="IPR001095">
    <property type="entry name" value="Acetyl_CoA_COase_a_su"/>
</dbReference>
<dbReference type="InterPro" id="IPR029045">
    <property type="entry name" value="ClpP/crotonase-like_dom_sf"/>
</dbReference>
<dbReference type="InterPro" id="IPR011763">
    <property type="entry name" value="COA_CT_C"/>
</dbReference>
<dbReference type="NCBIfam" id="TIGR00513">
    <property type="entry name" value="accA"/>
    <property type="match status" value="1"/>
</dbReference>
<dbReference type="NCBIfam" id="NF041504">
    <property type="entry name" value="AccA_sub"/>
    <property type="match status" value="1"/>
</dbReference>
<dbReference type="NCBIfam" id="NF004344">
    <property type="entry name" value="PRK05724.1"/>
    <property type="match status" value="1"/>
</dbReference>
<dbReference type="PANTHER" id="PTHR42853">
    <property type="entry name" value="ACETYL-COENZYME A CARBOXYLASE CARBOXYL TRANSFERASE SUBUNIT ALPHA"/>
    <property type="match status" value="1"/>
</dbReference>
<dbReference type="PANTHER" id="PTHR42853:SF3">
    <property type="entry name" value="ACETYL-COENZYME A CARBOXYLASE CARBOXYL TRANSFERASE SUBUNIT ALPHA, CHLOROPLASTIC"/>
    <property type="match status" value="1"/>
</dbReference>
<dbReference type="Pfam" id="PF03255">
    <property type="entry name" value="ACCA"/>
    <property type="match status" value="1"/>
</dbReference>
<dbReference type="PRINTS" id="PR01069">
    <property type="entry name" value="ACCCTRFRASEA"/>
</dbReference>
<dbReference type="SUPFAM" id="SSF52096">
    <property type="entry name" value="ClpP/crotonase"/>
    <property type="match status" value="1"/>
</dbReference>
<dbReference type="PROSITE" id="PS50989">
    <property type="entry name" value="COA_CT_CTER"/>
    <property type="match status" value="1"/>
</dbReference>
<gene>
    <name evidence="1" type="primary">accA</name>
    <name type="ordered locus">Cphamn1_0325</name>
</gene>
<evidence type="ECO:0000255" key="1">
    <source>
        <dbReference type="HAMAP-Rule" id="MF_00823"/>
    </source>
</evidence>
<evidence type="ECO:0000255" key="2">
    <source>
        <dbReference type="PROSITE-ProRule" id="PRU01137"/>
    </source>
</evidence>